<comment type="function">
    <text evidence="1">Part of the ABC transporter complex ZnuABC involved in zinc import. Responsible for energy coupling to the transport system.</text>
</comment>
<comment type="catalytic activity">
    <reaction evidence="1">
        <text>Zn(2+)(out) + ATP(in) + H2O(in) = Zn(2+)(in) + ADP(in) + phosphate(in) + H(+)(in)</text>
        <dbReference type="Rhea" id="RHEA:29795"/>
        <dbReference type="ChEBI" id="CHEBI:15377"/>
        <dbReference type="ChEBI" id="CHEBI:15378"/>
        <dbReference type="ChEBI" id="CHEBI:29105"/>
        <dbReference type="ChEBI" id="CHEBI:30616"/>
        <dbReference type="ChEBI" id="CHEBI:43474"/>
        <dbReference type="ChEBI" id="CHEBI:456216"/>
        <dbReference type="EC" id="7.2.2.20"/>
    </reaction>
</comment>
<comment type="subunit">
    <text evidence="1">The complex is composed of two ATP-binding proteins (ZnuC), two transmembrane proteins (ZnuB) and a solute-binding protein (ZnuA).</text>
</comment>
<comment type="subcellular location">
    <subcellularLocation>
        <location evidence="1">Cell inner membrane</location>
        <topology evidence="1">Peripheral membrane protein</topology>
    </subcellularLocation>
</comment>
<comment type="similarity">
    <text evidence="1">Belongs to the ABC transporter superfamily. Zinc importer (TC 3.A.1.15.5) family.</text>
</comment>
<protein>
    <recommendedName>
        <fullName evidence="1">Zinc import ATP-binding protein ZnuC</fullName>
        <ecNumber evidence="1">7.2.2.20</ecNumber>
    </recommendedName>
</protein>
<accession>A1WXT0</accession>
<dbReference type="EC" id="7.2.2.20" evidence="1"/>
<dbReference type="EMBL" id="CP000544">
    <property type="protein sequence ID" value="ABM62492.1"/>
    <property type="molecule type" value="Genomic_DNA"/>
</dbReference>
<dbReference type="RefSeq" id="WP_011814514.1">
    <property type="nucleotide sequence ID" value="NC_008789.1"/>
</dbReference>
<dbReference type="SMR" id="A1WXT0"/>
<dbReference type="STRING" id="349124.Hhal_1728"/>
<dbReference type="KEGG" id="hha:Hhal_1728"/>
<dbReference type="eggNOG" id="COG1121">
    <property type="taxonomic scope" value="Bacteria"/>
</dbReference>
<dbReference type="HOGENOM" id="CLU_000604_1_11_6"/>
<dbReference type="OrthoDB" id="9806726at2"/>
<dbReference type="Proteomes" id="UP000000647">
    <property type="component" value="Chromosome"/>
</dbReference>
<dbReference type="GO" id="GO:0005886">
    <property type="term" value="C:plasma membrane"/>
    <property type="evidence" value="ECO:0007669"/>
    <property type="project" value="UniProtKB-SubCell"/>
</dbReference>
<dbReference type="GO" id="GO:0015633">
    <property type="term" value="F:ABC-type zinc transporter activity"/>
    <property type="evidence" value="ECO:0007669"/>
    <property type="project" value="UniProtKB-EC"/>
</dbReference>
<dbReference type="GO" id="GO:0005524">
    <property type="term" value="F:ATP binding"/>
    <property type="evidence" value="ECO:0007669"/>
    <property type="project" value="UniProtKB-KW"/>
</dbReference>
<dbReference type="GO" id="GO:0016887">
    <property type="term" value="F:ATP hydrolysis activity"/>
    <property type="evidence" value="ECO:0007669"/>
    <property type="project" value="InterPro"/>
</dbReference>
<dbReference type="GO" id="GO:0010043">
    <property type="term" value="P:response to zinc ion"/>
    <property type="evidence" value="ECO:0007669"/>
    <property type="project" value="TreeGrafter"/>
</dbReference>
<dbReference type="Gene3D" id="3.40.50.300">
    <property type="entry name" value="P-loop containing nucleotide triphosphate hydrolases"/>
    <property type="match status" value="1"/>
</dbReference>
<dbReference type="InterPro" id="IPR003593">
    <property type="entry name" value="AAA+_ATPase"/>
</dbReference>
<dbReference type="InterPro" id="IPR003439">
    <property type="entry name" value="ABC_transporter-like_ATP-bd"/>
</dbReference>
<dbReference type="InterPro" id="IPR017871">
    <property type="entry name" value="ABC_transporter-like_CS"/>
</dbReference>
<dbReference type="InterPro" id="IPR050153">
    <property type="entry name" value="Metal_Ion_Import_ABC"/>
</dbReference>
<dbReference type="InterPro" id="IPR027417">
    <property type="entry name" value="P-loop_NTPase"/>
</dbReference>
<dbReference type="PANTHER" id="PTHR42734">
    <property type="entry name" value="METAL TRANSPORT SYSTEM ATP-BINDING PROTEIN TM_0124-RELATED"/>
    <property type="match status" value="1"/>
</dbReference>
<dbReference type="PANTHER" id="PTHR42734:SF9">
    <property type="entry name" value="ZINC IMPORT ATP-BINDING PROTEIN ZNUC"/>
    <property type="match status" value="1"/>
</dbReference>
<dbReference type="Pfam" id="PF00005">
    <property type="entry name" value="ABC_tran"/>
    <property type="match status" value="1"/>
</dbReference>
<dbReference type="SMART" id="SM00382">
    <property type="entry name" value="AAA"/>
    <property type="match status" value="1"/>
</dbReference>
<dbReference type="SUPFAM" id="SSF52540">
    <property type="entry name" value="P-loop containing nucleoside triphosphate hydrolases"/>
    <property type="match status" value="1"/>
</dbReference>
<dbReference type="PROSITE" id="PS00211">
    <property type="entry name" value="ABC_TRANSPORTER_1"/>
    <property type="match status" value="1"/>
</dbReference>
<dbReference type="PROSITE" id="PS50893">
    <property type="entry name" value="ABC_TRANSPORTER_2"/>
    <property type="match status" value="1"/>
</dbReference>
<dbReference type="PROSITE" id="PS51298">
    <property type="entry name" value="ZNUC"/>
    <property type="match status" value="1"/>
</dbReference>
<keyword id="KW-0067">ATP-binding</keyword>
<keyword id="KW-0997">Cell inner membrane</keyword>
<keyword id="KW-1003">Cell membrane</keyword>
<keyword id="KW-0406">Ion transport</keyword>
<keyword id="KW-0472">Membrane</keyword>
<keyword id="KW-0547">Nucleotide-binding</keyword>
<keyword id="KW-1185">Reference proteome</keyword>
<keyword id="KW-1278">Translocase</keyword>
<keyword id="KW-0813">Transport</keyword>
<keyword id="KW-0862">Zinc</keyword>
<keyword id="KW-0864">Zinc transport</keyword>
<sequence length="260" mass="27755">MSPVQPLAGRQAADDPLIRLQEVAVTFGGRSILQDVRLEVVPGRITTLVGNNGAGKTTLLRVVVGLTHTAAGRVWRAPQVRIGYVPQHFSVDANLPITARRFMALSGRANAARWQEVVADTGVEELLDQPLQGLSGGEMRRILLARALLQHPSVLALDEPAAGLDGRSQGALYRLIGTLRQRYGCAVVIISHDLNLVMAASDEVLCLEHGRIACRGAPASVIEHPEYQKLFGSHLGPDTGVFPHDHHDHSGPALAGGGRG</sequence>
<proteinExistence type="inferred from homology"/>
<feature type="chain" id="PRO_0000281513" description="Zinc import ATP-binding protein ZnuC">
    <location>
        <begin position="1"/>
        <end position="260"/>
    </location>
</feature>
<feature type="domain" description="ABC transporter" evidence="1">
    <location>
        <begin position="18"/>
        <end position="234"/>
    </location>
</feature>
<feature type="region of interest" description="Disordered" evidence="2">
    <location>
        <begin position="241"/>
        <end position="260"/>
    </location>
</feature>
<feature type="binding site" evidence="1">
    <location>
        <begin position="50"/>
        <end position="57"/>
    </location>
    <ligand>
        <name>ATP</name>
        <dbReference type="ChEBI" id="CHEBI:30616"/>
    </ligand>
</feature>
<evidence type="ECO:0000255" key="1">
    <source>
        <dbReference type="HAMAP-Rule" id="MF_01725"/>
    </source>
</evidence>
<evidence type="ECO:0000256" key="2">
    <source>
        <dbReference type="SAM" id="MobiDB-lite"/>
    </source>
</evidence>
<organism>
    <name type="scientific">Halorhodospira halophila (strain DSM 244 / SL1)</name>
    <name type="common">Ectothiorhodospira halophila (strain DSM 244 / SL1)</name>
    <dbReference type="NCBI Taxonomy" id="349124"/>
    <lineage>
        <taxon>Bacteria</taxon>
        <taxon>Pseudomonadati</taxon>
        <taxon>Pseudomonadota</taxon>
        <taxon>Gammaproteobacteria</taxon>
        <taxon>Chromatiales</taxon>
        <taxon>Ectothiorhodospiraceae</taxon>
        <taxon>Halorhodospira</taxon>
    </lineage>
</organism>
<gene>
    <name evidence="1" type="primary">znuC</name>
    <name type="ordered locus">Hhal_1728</name>
</gene>
<name>ZNUC_HALHL</name>
<reference key="1">
    <citation type="submission" date="2006-12" db="EMBL/GenBank/DDBJ databases">
        <title>Complete sequence of Halorhodospira halophila SL1.</title>
        <authorList>
            <consortium name="US DOE Joint Genome Institute"/>
            <person name="Copeland A."/>
            <person name="Lucas S."/>
            <person name="Lapidus A."/>
            <person name="Barry K."/>
            <person name="Detter J.C."/>
            <person name="Glavina del Rio T."/>
            <person name="Hammon N."/>
            <person name="Israni S."/>
            <person name="Dalin E."/>
            <person name="Tice H."/>
            <person name="Pitluck S."/>
            <person name="Saunders E."/>
            <person name="Brettin T."/>
            <person name="Bruce D."/>
            <person name="Han C."/>
            <person name="Tapia R."/>
            <person name="Schmutz J."/>
            <person name="Larimer F."/>
            <person name="Land M."/>
            <person name="Hauser L."/>
            <person name="Kyrpides N."/>
            <person name="Mikhailova N."/>
            <person name="Hoff W."/>
            <person name="Richardson P."/>
        </authorList>
    </citation>
    <scope>NUCLEOTIDE SEQUENCE [LARGE SCALE GENOMIC DNA]</scope>
    <source>
        <strain>DSM 244 / SL1</strain>
    </source>
</reference>